<name>SYI_SALTY</name>
<gene>
    <name evidence="1" type="primary">ileS</name>
    <name type="ordered locus">STM0046</name>
</gene>
<proteinExistence type="inferred from homology"/>
<evidence type="ECO:0000255" key="1">
    <source>
        <dbReference type="HAMAP-Rule" id="MF_02002"/>
    </source>
</evidence>
<sequence>MSDYKSTLNLPETGFPMRGDLAKREPGMLARWTDDDLYGIIRAAKKGKKTFILHDGPPYANGSIHIGHSVNKILKDIIVKSKGLSGFDSPYVPGWDCHGLPIELKVEQEFGKPGEKFTAAEFRAKCREYAATQVDGQRKDFIRLGVLGDWSHPYLTMDFKTEANIIRALGRIIKNGHLHKGAKPVHWCVDCRSALAEAEVEYYDKTSPSIDVAFRAVDQDAVKAKFGLPGVSGPVSLVIWTTTPWTLPANRAISLAPDFDYALVQIDGQAVILAKDLVESVMQRIGAAEYTILGTVKGAELELLRFTHPFMGFDVPAILGDHVTLDAGTGAVHTAPGHGPDDYVIGQKYGLETANPVGPDGTYLPGTYPTLDGVNVFKANDIVIELLKEKGALLHVEKMQHSYPCCWRHKTPIIFRATPQWFVSMDKEGLRQQSLKEIKGVQWIPDWGQARIESMVANRPDWCISRQRTWGVPMSLFVHKETQELLPIERTLAAMEEVAKRVEVDGIQAWWDLDPKEILGEDADQYEKVPDTLDVWFDSGSTSYSVVDARPEFAGHAADMYLEGSDQHRGWFMSSLMISVAMKGKAPYRQVLTHGFTVDGQGRKMSKSIGNTVSPQDVMNKLGADILRLWVASTDYTGEMAVSDEILKRAADSYRRIRNTARFLLANLNGFNPATDMVKPEEMVVLDRWAVGCAKTAQQEILKAYEAYDFHEVVQRLMRFCSVEMGSFYLDIIKDRQYTAKADSVARRSCQTALYHIAEALVRWMAPIMSFTADEIWGYLPGEREKYVFTGEWYDGLFGLEENEEFNDAFWDDVRYIKDQVNKELENQKANGIKSNLEAKVTLKYADDANGTIKKLKLLGEEVRFIFITSQFVISEQAGGIDDENIQYNAGNTTVQAVVTRAEGDKCPRCWHYTTDVGKVAEHADICGRCVSNIAGNGEQRKFA</sequence>
<reference key="1">
    <citation type="journal article" date="2001" name="Nature">
        <title>Complete genome sequence of Salmonella enterica serovar Typhimurium LT2.</title>
        <authorList>
            <person name="McClelland M."/>
            <person name="Sanderson K.E."/>
            <person name="Spieth J."/>
            <person name="Clifton S.W."/>
            <person name="Latreille P."/>
            <person name="Courtney L."/>
            <person name="Porwollik S."/>
            <person name="Ali J."/>
            <person name="Dante M."/>
            <person name="Du F."/>
            <person name="Hou S."/>
            <person name="Layman D."/>
            <person name="Leonard S."/>
            <person name="Nguyen C."/>
            <person name="Scott K."/>
            <person name="Holmes A."/>
            <person name="Grewal N."/>
            <person name="Mulvaney E."/>
            <person name="Ryan E."/>
            <person name="Sun H."/>
            <person name="Florea L."/>
            <person name="Miller W."/>
            <person name="Stoneking T."/>
            <person name="Nhan M."/>
            <person name="Waterston R."/>
            <person name="Wilson R.K."/>
        </authorList>
    </citation>
    <scope>NUCLEOTIDE SEQUENCE [LARGE SCALE GENOMIC DNA]</scope>
    <source>
        <strain>LT2 / SGSC1412 / ATCC 700720</strain>
    </source>
</reference>
<organism>
    <name type="scientific">Salmonella typhimurium (strain LT2 / SGSC1412 / ATCC 700720)</name>
    <dbReference type="NCBI Taxonomy" id="99287"/>
    <lineage>
        <taxon>Bacteria</taxon>
        <taxon>Pseudomonadati</taxon>
        <taxon>Pseudomonadota</taxon>
        <taxon>Gammaproteobacteria</taxon>
        <taxon>Enterobacterales</taxon>
        <taxon>Enterobacteriaceae</taxon>
        <taxon>Salmonella</taxon>
    </lineage>
</organism>
<protein>
    <recommendedName>
        <fullName evidence="1">Isoleucine--tRNA ligase</fullName>
        <ecNumber evidence="1">6.1.1.5</ecNumber>
    </recommendedName>
    <alternativeName>
        <fullName evidence="1">Isoleucyl-tRNA synthetase</fullName>
        <shortName evidence="1">IleRS</shortName>
    </alternativeName>
</protein>
<keyword id="KW-0030">Aminoacyl-tRNA synthetase</keyword>
<keyword id="KW-0067">ATP-binding</keyword>
<keyword id="KW-0963">Cytoplasm</keyword>
<keyword id="KW-0436">Ligase</keyword>
<keyword id="KW-0479">Metal-binding</keyword>
<keyword id="KW-0547">Nucleotide-binding</keyword>
<keyword id="KW-0648">Protein biosynthesis</keyword>
<keyword id="KW-1185">Reference proteome</keyword>
<keyword id="KW-0862">Zinc</keyword>
<accession>Q8ZRZ0</accession>
<feature type="chain" id="PRO_0000098458" description="Isoleucine--tRNA ligase">
    <location>
        <begin position="1"/>
        <end position="944"/>
    </location>
</feature>
<feature type="short sequence motif" description="'HIGH' region">
    <location>
        <begin position="58"/>
        <end position="68"/>
    </location>
</feature>
<feature type="short sequence motif" description="'KMSKS' region">
    <location>
        <begin position="604"/>
        <end position="608"/>
    </location>
</feature>
<feature type="binding site" evidence="1">
    <location>
        <position position="563"/>
    </location>
    <ligand>
        <name>L-isoleucyl-5'-AMP</name>
        <dbReference type="ChEBI" id="CHEBI:178002"/>
    </ligand>
</feature>
<feature type="binding site" evidence="1">
    <location>
        <position position="607"/>
    </location>
    <ligand>
        <name>ATP</name>
        <dbReference type="ChEBI" id="CHEBI:30616"/>
    </ligand>
</feature>
<feature type="binding site" evidence="1">
    <location>
        <position position="907"/>
    </location>
    <ligand>
        <name>Zn(2+)</name>
        <dbReference type="ChEBI" id="CHEBI:29105"/>
    </ligand>
</feature>
<feature type="binding site" evidence="1">
    <location>
        <position position="910"/>
    </location>
    <ligand>
        <name>Zn(2+)</name>
        <dbReference type="ChEBI" id="CHEBI:29105"/>
    </ligand>
</feature>
<feature type="binding site" evidence="1">
    <location>
        <position position="927"/>
    </location>
    <ligand>
        <name>Zn(2+)</name>
        <dbReference type="ChEBI" id="CHEBI:29105"/>
    </ligand>
</feature>
<feature type="binding site" evidence="1">
    <location>
        <position position="930"/>
    </location>
    <ligand>
        <name>Zn(2+)</name>
        <dbReference type="ChEBI" id="CHEBI:29105"/>
    </ligand>
</feature>
<dbReference type="EC" id="6.1.1.5" evidence="1"/>
<dbReference type="EMBL" id="AE006468">
    <property type="protein sequence ID" value="AAL19010.1"/>
    <property type="molecule type" value="Genomic_DNA"/>
</dbReference>
<dbReference type="RefSeq" id="NP_459051.1">
    <property type="nucleotide sequence ID" value="NC_003197.2"/>
</dbReference>
<dbReference type="RefSeq" id="WP_001670710.1">
    <property type="nucleotide sequence ID" value="NC_003197.2"/>
</dbReference>
<dbReference type="SMR" id="Q8ZRZ0"/>
<dbReference type="STRING" id="99287.STM0046"/>
<dbReference type="PaxDb" id="99287-STM0046"/>
<dbReference type="GeneID" id="1251564"/>
<dbReference type="KEGG" id="stm:STM0046"/>
<dbReference type="PATRIC" id="fig|99287.12.peg.48"/>
<dbReference type="HOGENOM" id="CLU_001493_7_1_6"/>
<dbReference type="OMA" id="HCWRCKT"/>
<dbReference type="PhylomeDB" id="Q8ZRZ0"/>
<dbReference type="BioCyc" id="SENT99287:STM0046-MONOMER"/>
<dbReference type="Proteomes" id="UP000001014">
    <property type="component" value="Chromosome"/>
</dbReference>
<dbReference type="GO" id="GO:0005829">
    <property type="term" value="C:cytosol"/>
    <property type="evidence" value="ECO:0000318"/>
    <property type="project" value="GO_Central"/>
</dbReference>
<dbReference type="GO" id="GO:0002161">
    <property type="term" value="F:aminoacyl-tRNA deacylase activity"/>
    <property type="evidence" value="ECO:0007669"/>
    <property type="project" value="InterPro"/>
</dbReference>
<dbReference type="GO" id="GO:0005524">
    <property type="term" value="F:ATP binding"/>
    <property type="evidence" value="ECO:0007669"/>
    <property type="project" value="UniProtKB-UniRule"/>
</dbReference>
<dbReference type="GO" id="GO:0004822">
    <property type="term" value="F:isoleucine-tRNA ligase activity"/>
    <property type="evidence" value="ECO:0000318"/>
    <property type="project" value="GO_Central"/>
</dbReference>
<dbReference type="GO" id="GO:0000049">
    <property type="term" value="F:tRNA binding"/>
    <property type="evidence" value="ECO:0007669"/>
    <property type="project" value="InterPro"/>
</dbReference>
<dbReference type="GO" id="GO:0008270">
    <property type="term" value="F:zinc ion binding"/>
    <property type="evidence" value="ECO:0007669"/>
    <property type="project" value="UniProtKB-UniRule"/>
</dbReference>
<dbReference type="GO" id="GO:0006428">
    <property type="term" value="P:isoleucyl-tRNA aminoacylation"/>
    <property type="evidence" value="ECO:0000318"/>
    <property type="project" value="GO_Central"/>
</dbReference>
<dbReference type="CDD" id="cd07960">
    <property type="entry name" value="Anticodon_Ia_Ile_BEm"/>
    <property type="match status" value="1"/>
</dbReference>
<dbReference type="CDD" id="cd00818">
    <property type="entry name" value="IleRS_core"/>
    <property type="match status" value="1"/>
</dbReference>
<dbReference type="FunFam" id="1.10.730.20:FF:000001">
    <property type="entry name" value="Isoleucine--tRNA ligase"/>
    <property type="match status" value="1"/>
</dbReference>
<dbReference type="FunFam" id="3.40.50.620:FF:000042">
    <property type="entry name" value="Isoleucine--tRNA ligase"/>
    <property type="match status" value="1"/>
</dbReference>
<dbReference type="FunFam" id="3.40.50.620:FF:000048">
    <property type="entry name" value="Isoleucine--tRNA ligase"/>
    <property type="match status" value="1"/>
</dbReference>
<dbReference type="FunFam" id="3.90.740.10:FF:000002">
    <property type="entry name" value="Isoleucine--tRNA ligase"/>
    <property type="match status" value="1"/>
</dbReference>
<dbReference type="Gene3D" id="1.10.730.20">
    <property type="match status" value="1"/>
</dbReference>
<dbReference type="Gene3D" id="3.40.50.620">
    <property type="entry name" value="HUPs"/>
    <property type="match status" value="2"/>
</dbReference>
<dbReference type="Gene3D" id="3.90.740.10">
    <property type="entry name" value="Valyl/Leucyl/Isoleucyl-tRNA synthetase, editing domain"/>
    <property type="match status" value="1"/>
</dbReference>
<dbReference type="HAMAP" id="MF_02002">
    <property type="entry name" value="Ile_tRNA_synth_type1"/>
    <property type="match status" value="1"/>
</dbReference>
<dbReference type="InterPro" id="IPR001412">
    <property type="entry name" value="aa-tRNA-synth_I_CS"/>
</dbReference>
<dbReference type="InterPro" id="IPR002300">
    <property type="entry name" value="aa-tRNA-synth_Ia"/>
</dbReference>
<dbReference type="InterPro" id="IPR033708">
    <property type="entry name" value="Anticodon_Ile_BEm"/>
</dbReference>
<dbReference type="InterPro" id="IPR002301">
    <property type="entry name" value="Ile-tRNA-ligase"/>
</dbReference>
<dbReference type="InterPro" id="IPR023585">
    <property type="entry name" value="Ile-tRNA-ligase_type1"/>
</dbReference>
<dbReference type="InterPro" id="IPR050081">
    <property type="entry name" value="Ile-tRNA_ligase"/>
</dbReference>
<dbReference type="InterPro" id="IPR013155">
    <property type="entry name" value="M/V/L/I-tRNA-synth_anticd-bd"/>
</dbReference>
<dbReference type="InterPro" id="IPR014729">
    <property type="entry name" value="Rossmann-like_a/b/a_fold"/>
</dbReference>
<dbReference type="InterPro" id="IPR009080">
    <property type="entry name" value="tRNAsynth_Ia_anticodon-bd"/>
</dbReference>
<dbReference type="InterPro" id="IPR009008">
    <property type="entry name" value="Val/Leu/Ile-tRNA-synth_edit"/>
</dbReference>
<dbReference type="InterPro" id="IPR010663">
    <property type="entry name" value="Znf_FPG/IleRS"/>
</dbReference>
<dbReference type="NCBIfam" id="TIGR00392">
    <property type="entry name" value="ileS"/>
    <property type="match status" value="1"/>
</dbReference>
<dbReference type="PANTHER" id="PTHR42765:SF1">
    <property type="entry name" value="ISOLEUCINE--TRNA LIGASE, MITOCHONDRIAL"/>
    <property type="match status" value="1"/>
</dbReference>
<dbReference type="PANTHER" id="PTHR42765">
    <property type="entry name" value="SOLEUCYL-TRNA SYNTHETASE"/>
    <property type="match status" value="1"/>
</dbReference>
<dbReference type="Pfam" id="PF08264">
    <property type="entry name" value="Anticodon_1"/>
    <property type="match status" value="1"/>
</dbReference>
<dbReference type="Pfam" id="PF00133">
    <property type="entry name" value="tRNA-synt_1"/>
    <property type="match status" value="1"/>
</dbReference>
<dbReference type="Pfam" id="PF06827">
    <property type="entry name" value="zf-FPG_IleRS"/>
    <property type="match status" value="1"/>
</dbReference>
<dbReference type="PRINTS" id="PR00984">
    <property type="entry name" value="TRNASYNTHILE"/>
</dbReference>
<dbReference type="SUPFAM" id="SSF47323">
    <property type="entry name" value="Anticodon-binding domain of a subclass of class I aminoacyl-tRNA synthetases"/>
    <property type="match status" value="1"/>
</dbReference>
<dbReference type="SUPFAM" id="SSF52374">
    <property type="entry name" value="Nucleotidylyl transferase"/>
    <property type="match status" value="1"/>
</dbReference>
<dbReference type="SUPFAM" id="SSF50677">
    <property type="entry name" value="ValRS/IleRS/LeuRS editing domain"/>
    <property type="match status" value="1"/>
</dbReference>
<dbReference type="PROSITE" id="PS00178">
    <property type="entry name" value="AA_TRNA_LIGASE_I"/>
    <property type="match status" value="1"/>
</dbReference>
<comment type="function">
    <text evidence="1">Catalyzes the attachment of isoleucine to tRNA(Ile). As IleRS can inadvertently accommodate and process structurally similar amino acids such as valine, to avoid such errors it has two additional distinct tRNA(Ile)-dependent editing activities. One activity is designated as 'pretransfer' editing and involves the hydrolysis of activated Val-AMP. The other activity is designated 'posttransfer' editing and involves deacylation of mischarged Val-tRNA(Ile).</text>
</comment>
<comment type="catalytic activity">
    <reaction evidence="1">
        <text>tRNA(Ile) + L-isoleucine + ATP = L-isoleucyl-tRNA(Ile) + AMP + diphosphate</text>
        <dbReference type="Rhea" id="RHEA:11060"/>
        <dbReference type="Rhea" id="RHEA-COMP:9666"/>
        <dbReference type="Rhea" id="RHEA-COMP:9695"/>
        <dbReference type="ChEBI" id="CHEBI:30616"/>
        <dbReference type="ChEBI" id="CHEBI:33019"/>
        <dbReference type="ChEBI" id="CHEBI:58045"/>
        <dbReference type="ChEBI" id="CHEBI:78442"/>
        <dbReference type="ChEBI" id="CHEBI:78528"/>
        <dbReference type="ChEBI" id="CHEBI:456215"/>
        <dbReference type="EC" id="6.1.1.5"/>
    </reaction>
</comment>
<comment type="cofactor">
    <cofactor evidence="1">
        <name>Zn(2+)</name>
        <dbReference type="ChEBI" id="CHEBI:29105"/>
    </cofactor>
    <text evidence="1">Binds 1 zinc ion per subunit.</text>
</comment>
<comment type="subunit">
    <text evidence="1">Monomer.</text>
</comment>
<comment type="subcellular location">
    <subcellularLocation>
        <location evidence="1">Cytoplasm</location>
    </subcellularLocation>
</comment>
<comment type="domain">
    <text evidence="1">IleRS has two distinct active sites: one for aminoacylation and one for editing. The misactivated valine is translocated from the active site to the editing site, which sterically excludes the correctly activated isoleucine. The single editing site contains two valyl binding pockets, one specific for each substrate (Val-AMP or Val-tRNA(Ile)).</text>
</comment>
<comment type="similarity">
    <text evidence="1">Belongs to the class-I aminoacyl-tRNA synthetase family. IleS type 1 subfamily.</text>
</comment>